<comment type="function">
    <text evidence="4">Aminopeptidase which cleaves preproteins, imported into the mitochondrion, to their mature size. Could cleave both preproteins and preprotein intermediates already cleaved by the mitochondrial processing peptidase (MPP).</text>
</comment>
<comment type="cofactor">
    <cofactor evidence="7">
        <name>Zn(2+)</name>
        <dbReference type="ChEBI" id="CHEBI:29105"/>
    </cofactor>
    <text evidence="7">Binds 1 zinc ion.</text>
</comment>
<comment type="subcellular location">
    <subcellularLocation>
        <location evidence="4 5">Mitochondrion</location>
    </subcellularLocation>
</comment>
<comment type="disruption phenotype">
    <text evidence="5">No visible phenotype.</text>
</comment>
<comment type="similarity">
    <text evidence="7">Belongs to the peptidase M3 family.</text>
</comment>
<comment type="sequence caution" evidence="7">
    <conflict type="erroneous gene model prediction">
        <sequence resource="EMBL-CDS" id="BAB08670"/>
    </conflict>
    <text>The predicted gene At5g51540 has been split into 2 genes: At5g51540 and At5g51545.</text>
</comment>
<name>MIP_ARATH</name>
<sequence length="706" mass="79925">MWKLTRRLQPHINSTRWLVRNFRNGGAGDATGLYGFDHLKTAKGFQRFVADAIERSGELVSYISGMPSSPEIIKAMDEISDTVCCVVDSAELCRQTHPDREFVEEANKAAIEMNDYLHHLNTNHTLYAAVKKAEQDSNLLTKEASRTAHHLRMDFERGGIHLDPEKLDKVNNLTTNIFQLCREFSENIADDPGHVDIFPGSRIPRHLHHLLNPTYRSTSGGSRGSTRSAHKSKQKGFRINTDPRTVSSILQWTSDEEVRKMVYIQGNSVPHANHGVLEKLIAARHELSQMMGCNSYADIMVEPNLAKSPKVVTSFLQELSKTVKPKADEEFIAIRDFKREKCGNPSAELEPWDETYYTSMMKSSINDVDTAVVASYFPLPQCIEGLKVLVESLFGATFHTIPLAPGESWHPNVVKLSLHHPDEGDLGYLYLDLYSRKGKYPGCASFAIRGGRKISETEYQLPVIALVCNFSRACDSSIVKLNHSEVEVLFHEFGHALHSLLSRTDYQHFSGTRVALDLAEMPSNLFEYYAWDYRLLKRFARHYSTGETIPEKLVNSLQGARNMFAATEMQRQVFYALIDQMLFGEQPETARDVSHLVAELKRQHTSWNHVEGTHWYIRFSHLLNYGAGYYSYLYAKCFASTIWQSICEEDPLSLNTGTLLREKFFKHGGAKDPAELLTDLAGKEIISVHGEGIVPATTYLLNELRL</sequence>
<dbReference type="EC" id="3.4.24.-" evidence="7"/>
<dbReference type="EMBL" id="AB018109">
    <property type="protein sequence ID" value="BAB08670.1"/>
    <property type="status" value="ALT_SEQ"/>
    <property type="molecule type" value="Genomic_DNA"/>
</dbReference>
<dbReference type="EMBL" id="CP002688">
    <property type="protein sequence ID" value="AED96095.1"/>
    <property type="molecule type" value="Genomic_DNA"/>
</dbReference>
<dbReference type="RefSeq" id="NP_199967.2">
    <property type="nucleotide sequence ID" value="NM_124533.2"/>
</dbReference>
<dbReference type="SMR" id="F4KDA5"/>
<dbReference type="FunCoup" id="F4KDA5">
    <property type="interactions" value="2873"/>
</dbReference>
<dbReference type="STRING" id="3702.F4KDA5"/>
<dbReference type="MEROPS" id="M03.A12"/>
<dbReference type="PaxDb" id="3702-AT5G51540.1"/>
<dbReference type="ProteomicsDB" id="250712"/>
<dbReference type="EnsemblPlants" id="AT5G51540.1">
    <property type="protein sequence ID" value="AT5G51540.1"/>
    <property type="gene ID" value="AT5G51540"/>
</dbReference>
<dbReference type="GeneID" id="835228"/>
<dbReference type="Gramene" id="AT5G51540.1">
    <property type="protein sequence ID" value="AT5G51540.1"/>
    <property type="gene ID" value="AT5G51540"/>
</dbReference>
<dbReference type="KEGG" id="ath:AT5G51540"/>
<dbReference type="Araport" id="AT5G51540"/>
<dbReference type="TAIR" id="AT5G51540">
    <property type="gene designation" value="ATOCT1"/>
</dbReference>
<dbReference type="eggNOG" id="KOG2090">
    <property type="taxonomic scope" value="Eukaryota"/>
</dbReference>
<dbReference type="HOGENOM" id="CLU_001805_0_2_1"/>
<dbReference type="InParanoid" id="F4KDA5"/>
<dbReference type="OMA" id="ALMFEYM"/>
<dbReference type="OrthoDB" id="17530at2759"/>
<dbReference type="PRO" id="PR:F4KDA5"/>
<dbReference type="Proteomes" id="UP000006548">
    <property type="component" value="Chromosome 5"/>
</dbReference>
<dbReference type="ExpressionAtlas" id="F4KDA5">
    <property type="expression patterns" value="baseline and differential"/>
</dbReference>
<dbReference type="GO" id="GO:0009535">
    <property type="term" value="C:chloroplast thylakoid membrane"/>
    <property type="evidence" value="ECO:0007005"/>
    <property type="project" value="TAIR"/>
</dbReference>
<dbReference type="GO" id="GO:0005739">
    <property type="term" value="C:mitochondrion"/>
    <property type="evidence" value="ECO:0000314"/>
    <property type="project" value="UniProtKB"/>
</dbReference>
<dbReference type="GO" id="GO:0004177">
    <property type="term" value="F:aminopeptidase activity"/>
    <property type="evidence" value="ECO:0000315"/>
    <property type="project" value="UniProtKB"/>
</dbReference>
<dbReference type="GO" id="GO:0046872">
    <property type="term" value="F:metal ion binding"/>
    <property type="evidence" value="ECO:0007669"/>
    <property type="project" value="UniProtKB-KW"/>
</dbReference>
<dbReference type="GO" id="GO:0004222">
    <property type="term" value="F:metalloendopeptidase activity"/>
    <property type="evidence" value="ECO:0007669"/>
    <property type="project" value="InterPro"/>
</dbReference>
<dbReference type="GO" id="GO:0006508">
    <property type="term" value="P:proteolysis"/>
    <property type="evidence" value="ECO:0007669"/>
    <property type="project" value="UniProtKB-KW"/>
</dbReference>
<dbReference type="CDD" id="cd06457">
    <property type="entry name" value="M3A_MIP"/>
    <property type="match status" value="1"/>
</dbReference>
<dbReference type="FunFam" id="3.40.390.10:FF:000019">
    <property type="entry name" value="Mitochondrial intermediate peptidase, mitochondrial"/>
    <property type="match status" value="1"/>
</dbReference>
<dbReference type="Gene3D" id="3.40.390.10">
    <property type="entry name" value="Collagenase (Catalytic Domain)"/>
    <property type="match status" value="1"/>
</dbReference>
<dbReference type="Gene3D" id="1.10.1370.10">
    <property type="entry name" value="Neurolysin, domain 3"/>
    <property type="match status" value="1"/>
</dbReference>
<dbReference type="InterPro" id="IPR033851">
    <property type="entry name" value="M3A_MIP"/>
</dbReference>
<dbReference type="InterPro" id="IPR024079">
    <property type="entry name" value="MetalloPept_cat_dom_sf"/>
</dbReference>
<dbReference type="InterPro" id="IPR024077">
    <property type="entry name" value="Neurolysin/TOP_dom2"/>
</dbReference>
<dbReference type="InterPro" id="IPR045090">
    <property type="entry name" value="Pept_M3A_M3B"/>
</dbReference>
<dbReference type="InterPro" id="IPR001567">
    <property type="entry name" value="Pept_M3A_M3B_dom"/>
</dbReference>
<dbReference type="PANTHER" id="PTHR11804:SF79">
    <property type="entry name" value="MITOCHONDRIAL INTERMEDIATE PEPTIDASE"/>
    <property type="match status" value="1"/>
</dbReference>
<dbReference type="PANTHER" id="PTHR11804">
    <property type="entry name" value="PROTEASE M3 THIMET OLIGOPEPTIDASE-RELATED"/>
    <property type="match status" value="1"/>
</dbReference>
<dbReference type="Pfam" id="PF01432">
    <property type="entry name" value="Peptidase_M3"/>
    <property type="match status" value="1"/>
</dbReference>
<dbReference type="SUPFAM" id="SSF55486">
    <property type="entry name" value="Metalloproteases ('zincins'), catalytic domain"/>
    <property type="match status" value="1"/>
</dbReference>
<dbReference type="PROSITE" id="PS00142">
    <property type="entry name" value="ZINC_PROTEASE"/>
    <property type="match status" value="1"/>
</dbReference>
<accession>F4KDA5</accession>
<accession>Q9FHN0</accession>
<organism>
    <name type="scientific">Arabidopsis thaliana</name>
    <name type="common">Mouse-ear cress</name>
    <dbReference type="NCBI Taxonomy" id="3702"/>
    <lineage>
        <taxon>Eukaryota</taxon>
        <taxon>Viridiplantae</taxon>
        <taxon>Streptophyta</taxon>
        <taxon>Embryophyta</taxon>
        <taxon>Tracheophyta</taxon>
        <taxon>Spermatophyta</taxon>
        <taxon>Magnoliopsida</taxon>
        <taxon>eudicotyledons</taxon>
        <taxon>Gunneridae</taxon>
        <taxon>Pentapetalae</taxon>
        <taxon>rosids</taxon>
        <taxon>malvids</taxon>
        <taxon>Brassicales</taxon>
        <taxon>Brassicaceae</taxon>
        <taxon>Camelineae</taxon>
        <taxon>Arabidopsis</taxon>
    </lineage>
</organism>
<protein>
    <recommendedName>
        <fullName evidence="7">Mitochondrial intermediate peptidase, mitochondrial</fullName>
        <ecNumber evidence="7">3.4.24.-</ecNumber>
    </recommendedName>
    <alternativeName>
        <fullName evidence="6">AtOCT1</fullName>
    </alternativeName>
</protein>
<keyword id="KW-0378">Hydrolase</keyword>
<keyword id="KW-0479">Metal-binding</keyword>
<keyword id="KW-0482">Metalloprotease</keyword>
<keyword id="KW-0496">Mitochondrion</keyword>
<keyword id="KW-0645">Protease</keyword>
<keyword id="KW-1185">Reference proteome</keyword>
<keyword id="KW-0809">Transit peptide</keyword>
<keyword id="KW-0862">Zinc</keyword>
<feature type="transit peptide" description="Mitochondrion" evidence="1">
    <location>
        <begin position="1"/>
        <end position="29"/>
    </location>
</feature>
<feature type="chain" id="PRO_0000425141" description="Mitochondrial intermediate peptidase, mitochondrial">
    <location>
        <begin position="30"/>
        <end position="706"/>
    </location>
</feature>
<feature type="region of interest" description="Disordered" evidence="3">
    <location>
        <begin position="212"/>
        <end position="238"/>
    </location>
</feature>
<feature type="compositionally biased region" description="Low complexity" evidence="3">
    <location>
        <begin position="214"/>
        <end position="227"/>
    </location>
</feature>
<feature type="active site" evidence="2">
    <location>
        <position position="492"/>
    </location>
</feature>
<feature type="binding site" evidence="2">
    <location>
        <position position="491"/>
    </location>
    <ligand>
        <name>Zn(2+)</name>
        <dbReference type="ChEBI" id="CHEBI:29105"/>
        <note>catalytic</note>
    </ligand>
</feature>
<feature type="binding site" evidence="2">
    <location>
        <position position="495"/>
    </location>
    <ligand>
        <name>Zn(2+)</name>
        <dbReference type="ChEBI" id="CHEBI:29105"/>
        <note>catalytic</note>
    </ligand>
</feature>
<feature type="binding site" evidence="7">
    <location>
        <position position="520"/>
    </location>
    <ligand>
        <name>Zn(2+)</name>
        <dbReference type="ChEBI" id="CHEBI:29105"/>
        <note>catalytic</note>
    </ligand>
</feature>
<reference key="1">
    <citation type="journal article" date="2000" name="DNA Res.">
        <title>Structural analysis of Arabidopsis thaliana chromosome 5. X. Sequence features of the regions of 3,076,755 bp covered by sixty P1 and TAC clones.</title>
        <authorList>
            <person name="Sato S."/>
            <person name="Nakamura Y."/>
            <person name="Kaneko T."/>
            <person name="Katoh T."/>
            <person name="Asamizu E."/>
            <person name="Kotani H."/>
            <person name="Tabata S."/>
        </authorList>
    </citation>
    <scope>NUCLEOTIDE SEQUENCE [LARGE SCALE GENOMIC DNA]</scope>
    <source>
        <strain>cv. Columbia</strain>
    </source>
</reference>
<reference key="2">
    <citation type="journal article" date="2017" name="Plant J.">
        <title>Araport11: a complete reannotation of the Arabidopsis thaliana reference genome.</title>
        <authorList>
            <person name="Cheng C.Y."/>
            <person name="Krishnakumar V."/>
            <person name="Chan A.P."/>
            <person name="Thibaud-Nissen F."/>
            <person name="Schobel S."/>
            <person name="Town C.D."/>
        </authorList>
    </citation>
    <scope>GENOME REANNOTATION</scope>
    <source>
        <strain>cv. Columbia</strain>
    </source>
</reference>
<reference key="3">
    <citation type="journal article" date="2012" name="Physiol. Plantarum">
        <title>Proteolytic system of plant mitochondria.</title>
        <authorList>
            <person name="Kwasniak M."/>
            <person name="Pogorzelec L."/>
            <person name="Migdal I."/>
            <person name="Smakowska E."/>
            <person name="Janska H."/>
        </authorList>
    </citation>
    <scope>IDENTIFICATION</scope>
    <scope>REVIEW OF MITOCHONDRIAL PROTEOLYTIC SYSTEM</scope>
</reference>
<reference key="4">
    <citation type="journal article" date="2013" name="Biochim. Biophys. Acta">
        <title>Processing peptidases in mitochondria and chloroplasts.</title>
        <authorList>
            <person name="Teixeira P.F."/>
            <person name="Glaser E."/>
        </authorList>
    </citation>
    <scope>REVIEW</scope>
</reference>
<reference key="5">
    <citation type="journal article" date="2015" name="J. Exp. Bot.">
        <title>Identification of cleavage sites and substrate proteins for two mitochondrial intermediate peptidases in Arabidopsis thaliana.</title>
        <authorList>
            <person name="Carrie C."/>
            <person name="Venne A.S."/>
            <person name="Zahedi R.P."/>
            <person name="Soll J."/>
        </authorList>
    </citation>
    <scope>SUBCELLULAR LOCATION</scope>
    <scope>FUNCTION</scope>
</reference>
<reference key="6">
    <citation type="journal article" date="2017" name="Front. Plant Sci.">
        <title>AtOMA1 affects the OXPHOS system and plant growth in contrast to other newly identified ATP-independent proteases in Arabidopsis mitochondria.</title>
        <authorList>
            <person name="Migdal I."/>
            <person name="Skibior-Blaszczyk R."/>
            <person name="Heidorn-Czarna M."/>
            <person name="Kolodziejczak M."/>
            <person name="Garbiec A."/>
            <person name="Janska H."/>
        </authorList>
    </citation>
    <scope>DISRUPTION PHENOTYPE</scope>
    <scope>SUBCELLULAR LOCATION</scope>
    <source>
        <strain>cv. Columbia</strain>
    </source>
</reference>
<evidence type="ECO:0000255" key="1"/>
<evidence type="ECO:0000255" key="2">
    <source>
        <dbReference type="PROSITE-ProRule" id="PRU10095"/>
    </source>
</evidence>
<evidence type="ECO:0000256" key="3">
    <source>
        <dbReference type="SAM" id="MobiDB-lite"/>
    </source>
</evidence>
<evidence type="ECO:0000269" key="4">
    <source>
    </source>
</evidence>
<evidence type="ECO:0000269" key="5">
    <source>
    </source>
</evidence>
<evidence type="ECO:0000303" key="6">
    <source>
    </source>
</evidence>
<evidence type="ECO:0000305" key="7"/>
<evidence type="ECO:0000312" key="8">
    <source>
        <dbReference type="Araport" id="AT5G51540"/>
    </source>
</evidence>
<evidence type="ECO:0000312" key="9">
    <source>
        <dbReference type="EMBL" id="BAB08670.1"/>
    </source>
</evidence>
<gene>
    <name evidence="6" type="primary">OCT1</name>
    <name evidence="7" type="synonym">MIP</name>
    <name evidence="8" type="ordered locus">At5g51540</name>
    <name evidence="9" type="ORF">K17N15.9</name>
</gene>
<proteinExistence type="inferred from homology"/>